<evidence type="ECO:0000255" key="1">
    <source>
        <dbReference type="HAMAP-Rule" id="MF_00407"/>
    </source>
</evidence>
<name>DNLI_MYCSK</name>
<proteinExistence type="inferred from homology"/>
<feature type="chain" id="PRO_0000365229" description="Probable DNA ligase">
    <location>
        <begin position="1"/>
        <end position="520"/>
    </location>
</feature>
<feature type="active site" description="N6-AMP-lysine intermediate" evidence="1">
    <location>
        <position position="215"/>
    </location>
</feature>
<feature type="binding site" evidence="1">
    <location>
        <position position="213"/>
    </location>
    <ligand>
        <name>ATP</name>
        <dbReference type="ChEBI" id="CHEBI:30616"/>
    </ligand>
</feature>
<feature type="binding site" evidence="1">
    <location>
        <position position="220"/>
    </location>
    <ligand>
        <name>ATP</name>
        <dbReference type="ChEBI" id="CHEBI:30616"/>
    </ligand>
</feature>
<feature type="binding site" evidence="1">
    <location>
        <position position="235"/>
    </location>
    <ligand>
        <name>ATP</name>
        <dbReference type="ChEBI" id="CHEBI:30616"/>
    </ligand>
</feature>
<feature type="binding site" evidence="1">
    <location>
        <position position="264"/>
    </location>
    <ligand>
        <name>ATP</name>
        <dbReference type="ChEBI" id="CHEBI:30616"/>
    </ligand>
</feature>
<feature type="binding site" evidence="1">
    <location>
        <position position="300"/>
    </location>
    <ligand>
        <name>ATP</name>
        <dbReference type="ChEBI" id="CHEBI:30616"/>
    </ligand>
</feature>
<feature type="binding site" evidence="1">
    <location>
        <position position="372"/>
    </location>
    <ligand>
        <name>ATP</name>
        <dbReference type="ChEBI" id="CHEBI:30616"/>
    </ligand>
</feature>
<feature type="binding site" evidence="1">
    <location>
        <position position="378"/>
    </location>
    <ligand>
        <name>ATP</name>
        <dbReference type="ChEBI" id="CHEBI:30616"/>
    </ligand>
</feature>
<accession>A1UDY9</accession>
<sequence>MLLVDVATASVDVGAMSSRLAKTARIADLLSRAGTEQDARLVAVTVAWLSGELPQRQIGVGWAALRSLPAPAAAPTLTVTAVDAVFSEIGAVAGKGSQARRAGLIAELFAAATDVEQTFLRRLLTGELRQGALIGVMADAVAKAADVPAARVRRAAMLAGDLPAVAAAVLAGGDAALARFTLQVGRPVGPMLAQTATGVADALDRLGGTAVFEAKLDGARVQIHRRGSDVSVYTRSLDDVTARLPEVVEAALALPVTDLIADAEAIALRPDGRPHRFQVTASRFGRAAARATQPLSVFMFDLLHVDGADLLDQPTSDRVRVLDDLVPAAHRVDRLVTDDGAAAQRFLEATLAAGHEGVMAKSPNAPYEAGRRGAGWLKVKPVHTLDLVVLAVEWGSGRRTGKLSNIHLGARDPATGGFVMLGKTFKGMTDAMLDWQTARFLELADPAAQPATSGRDPTDGHTVKVRPEQVVEIAFDGVQGSTRYPGGMALRFARVLRYRDDKSPAEADTVDTVRAFYEHG</sequence>
<keyword id="KW-0067">ATP-binding</keyword>
<keyword id="KW-0131">Cell cycle</keyword>
<keyword id="KW-0132">Cell division</keyword>
<keyword id="KW-0227">DNA damage</keyword>
<keyword id="KW-0233">DNA recombination</keyword>
<keyword id="KW-0234">DNA repair</keyword>
<keyword id="KW-0235">DNA replication</keyword>
<keyword id="KW-0436">Ligase</keyword>
<keyword id="KW-0460">Magnesium</keyword>
<keyword id="KW-0479">Metal-binding</keyword>
<keyword id="KW-0547">Nucleotide-binding</keyword>
<protein>
    <recommendedName>
        <fullName evidence="1">Probable DNA ligase</fullName>
        <ecNumber evidence="1">6.5.1.1</ecNumber>
    </recommendedName>
    <alternativeName>
        <fullName evidence="1">Polydeoxyribonucleotide synthase [ATP]</fullName>
    </alternativeName>
</protein>
<comment type="function">
    <text evidence="1">DNA ligase that seals nicks in double-stranded DNA during DNA replication, DNA recombination and DNA repair.</text>
</comment>
<comment type="catalytic activity">
    <reaction evidence="1">
        <text>ATP + (deoxyribonucleotide)n-3'-hydroxyl + 5'-phospho-(deoxyribonucleotide)m = (deoxyribonucleotide)n+m + AMP + diphosphate.</text>
        <dbReference type="EC" id="6.5.1.1"/>
    </reaction>
</comment>
<comment type="cofactor">
    <cofactor evidence="1">
        <name>Mg(2+)</name>
        <dbReference type="ChEBI" id="CHEBI:18420"/>
    </cofactor>
</comment>
<comment type="similarity">
    <text evidence="1">Belongs to the ATP-dependent DNA ligase family.</text>
</comment>
<gene>
    <name evidence="1" type="primary">lig</name>
    <name type="ordered locus">Mkms_1846</name>
</gene>
<dbReference type="EC" id="6.5.1.1" evidence="1"/>
<dbReference type="EMBL" id="CP000518">
    <property type="protein sequence ID" value="ABL91047.1"/>
    <property type="molecule type" value="Genomic_DNA"/>
</dbReference>
<dbReference type="SMR" id="A1UDY9"/>
<dbReference type="STRING" id="189918.Mkms_1846"/>
<dbReference type="KEGG" id="mkm:Mkms_1846"/>
<dbReference type="HOGENOM" id="CLU_005138_6_1_11"/>
<dbReference type="OrthoDB" id="3733803at2"/>
<dbReference type="GO" id="GO:0005524">
    <property type="term" value="F:ATP binding"/>
    <property type="evidence" value="ECO:0007669"/>
    <property type="project" value="UniProtKB-UniRule"/>
</dbReference>
<dbReference type="GO" id="GO:0003677">
    <property type="term" value="F:DNA binding"/>
    <property type="evidence" value="ECO:0007669"/>
    <property type="project" value="InterPro"/>
</dbReference>
<dbReference type="GO" id="GO:0003910">
    <property type="term" value="F:DNA ligase (ATP) activity"/>
    <property type="evidence" value="ECO:0007669"/>
    <property type="project" value="UniProtKB-UniRule"/>
</dbReference>
<dbReference type="GO" id="GO:0046872">
    <property type="term" value="F:metal ion binding"/>
    <property type="evidence" value="ECO:0007669"/>
    <property type="project" value="UniProtKB-KW"/>
</dbReference>
<dbReference type="GO" id="GO:0051301">
    <property type="term" value="P:cell division"/>
    <property type="evidence" value="ECO:0007669"/>
    <property type="project" value="UniProtKB-KW"/>
</dbReference>
<dbReference type="GO" id="GO:0071897">
    <property type="term" value="P:DNA biosynthetic process"/>
    <property type="evidence" value="ECO:0007669"/>
    <property type="project" value="InterPro"/>
</dbReference>
<dbReference type="GO" id="GO:0006310">
    <property type="term" value="P:DNA recombination"/>
    <property type="evidence" value="ECO:0007669"/>
    <property type="project" value="UniProtKB-UniRule"/>
</dbReference>
<dbReference type="GO" id="GO:0006281">
    <property type="term" value="P:DNA repair"/>
    <property type="evidence" value="ECO:0007669"/>
    <property type="project" value="UniProtKB-UniRule"/>
</dbReference>
<dbReference type="GO" id="GO:0006260">
    <property type="term" value="P:DNA replication"/>
    <property type="evidence" value="ECO:0007669"/>
    <property type="project" value="UniProtKB-UniRule"/>
</dbReference>
<dbReference type="CDD" id="cd07901">
    <property type="entry name" value="Adenylation_DNA_ligase_Arch_LigB"/>
    <property type="match status" value="1"/>
</dbReference>
<dbReference type="CDD" id="cd07972">
    <property type="entry name" value="OBF_DNA_ligase_Arch_LigB"/>
    <property type="match status" value="1"/>
</dbReference>
<dbReference type="FunFam" id="2.40.50.140:FF:000163">
    <property type="entry name" value="Probable DNA ligase"/>
    <property type="match status" value="1"/>
</dbReference>
<dbReference type="Gene3D" id="1.10.3260.10">
    <property type="entry name" value="DNA ligase, ATP-dependent, N-terminal domain"/>
    <property type="match status" value="1"/>
</dbReference>
<dbReference type="Gene3D" id="3.30.470.30">
    <property type="entry name" value="DNA ligase/mRNA capping enzyme"/>
    <property type="match status" value="1"/>
</dbReference>
<dbReference type="Gene3D" id="2.40.50.140">
    <property type="entry name" value="Nucleic acid-binding proteins"/>
    <property type="match status" value="1"/>
</dbReference>
<dbReference type="HAMAP" id="MF_00407">
    <property type="entry name" value="DNA_ligase"/>
    <property type="match status" value="1"/>
</dbReference>
<dbReference type="InterPro" id="IPR050191">
    <property type="entry name" value="ATP-dep_DNA_ligase"/>
</dbReference>
<dbReference type="InterPro" id="IPR022865">
    <property type="entry name" value="DNA_ligae_ATP-dep_bac/arc"/>
</dbReference>
<dbReference type="InterPro" id="IPR000977">
    <property type="entry name" value="DNA_ligase_ATP-dep"/>
</dbReference>
<dbReference type="InterPro" id="IPR012309">
    <property type="entry name" value="DNA_ligase_ATP-dep_C"/>
</dbReference>
<dbReference type="InterPro" id="IPR012310">
    <property type="entry name" value="DNA_ligase_ATP-dep_cent"/>
</dbReference>
<dbReference type="InterPro" id="IPR016059">
    <property type="entry name" value="DNA_ligase_ATP-dep_CS"/>
</dbReference>
<dbReference type="InterPro" id="IPR012308">
    <property type="entry name" value="DNA_ligase_ATP-dep_N"/>
</dbReference>
<dbReference type="InterPro" id="IPR036599">
    <property type="entry name" value="DNA_ligase_N_sf"/>
</dbReference>
<dbReference type="InterPro" id="IPR012340">
    <property type="entry name" value="NA-bd_OB-fold"/>
</dbReference>
<dbReference type="NCBIfam" id="TIGR00574">
    <property type="entry name" value="dnl1"/>
    <property type="match status" value="1"/>
</dbReference>
<dbReference type="NCBIfam" id="NF002868">
    <property type="entry name" value="PRK03180.1"/>
    <property type="match status" value="1"/>
</dbReference>
<dbReference type="PANTHER" id="PTHR45674">
    <property type="entry name" value="DNA LIGASE 1/3 FAMILY MEMBER"/>
    <property type="match status" value="1"/>
</dbReference>
<dbReference type="PANTHER" id="PTHR45674:SF13">
    <property type="entry name" value="DNA LIGASE-RELATED"/>
    <property type="match status" value="1"/>
</dbReference>
<dbReference type="Pfam" id="PF04679">
    <property type="entry name" value="DNA_ligase_A_C"/>
    <property type="match status" value="1"/>
</dbReference>
<dbReference type="Pfam" id="PF01068">
    <property type="entry name" value="DNA_ligase_A_M"/>
    <property type="match status" value="1"/>
</dbReference>
<dbReference type="Pfam" id="PF04675">
    <property type="entry name" value="DNA_ligase_A_N"/>
    <property type="match status" value="1"/>
</dbReference>
<dbReference type="SUPFAM" id="SSF117018">
    <property type="entry name" value="ATP-dependent DNA ligase DNA-binding domain"/>
    <property type="match status" value="1"/>
</dbReference>
<dbReference type="SUPFAM" id="SSF56091">
    <property type="entry name" value="DNA ligase/mRNA capping enzyme, catalytic domain"/>
    <property type="match status" value="1"/>
</dbReference>
<dbReference type="SUPFAM" id="SSF50249">
    <property type="entry name" value="Nucleic acid-binding proteins"/>
    <property type="match status" value="1"/>
</dbReference>
<dbReference type="PROSITE" id="PS00697">
    <property type="entry name" value="DNA_LIGASE_A1"/>
    <property type="match status" value="1"/>
</dbReference>
<dbReference type="PROSITE" id="PS00333">
    <property type="entry name" value="DNA_LIGASE_A2"/>
    <property type="match status" value="1"/>
</dbReference>
<dbReference type="PROSITE" id="PS50160">
    <property type="entry name" value="DNA_LIGASE_A3"/>
    <property type="match status" value="1"/>
</dbReference>
<organism>
    <name type="scientific">Mycobacterium sp. (strain KMS)</name>
    <dbReference type="NCBI Taxonomy" id="189918"/>
    <lineage>
        <taxon>Bacteria</taxon>
        <taxon>Bacillati</taxon>
        <taxon>Actinomycetota</taxon>
        <taxon>Actinomycetes</taxon>
        <taxon>Mycobacteriales</taxon>
        <taxon>Mycobacteriaceae</taxon>
        <taxon>Mycobacterium</taxon>
    </lineage>
</organism>
<reference key="1">
    <citation type="submission" date="2006-12" db="EMBL/GenBank/DDBJ databases">
        <title>Complete sequence of chromosome of Mycobacterium sp. KMS.</title>
        <authorList>
            <consortium name="US DOE Joint Genome Institute"/>
            <person name="Copeland A."/>
            <person name="Lucas S."/>
            <person name="Lapidus A."/>
            <person name="Barry K."/>
            <person name="Detter J.C."/>
            <person name="Glavina del Rio T."/>
            <person name="Hammon N."/>
            <person name="Israni S."/>
            <person name="Dalin E."/>
            <person name="Tice H."/>
            <person name="Pitluck S."/>
            <person name="Kiss H."/>
            <person name="Brettin T."/>
            <person name="Bruce D."/>
            <person name="Han C."/>
            <person name="Tapia R."/>
            <person name="Gilna P."/>
            <person name="Schmutz J."/>
            <person name="Larimer F."/>
            <person name="Land M."/>
            <person name="Hauser L."/>
            <person name="Kyrpides N."/>
            <person name="Mikhailova N."/>
            <person name="Miller C.D."/>
            <person name="Richardson P."/>
        </authorList>
    </citation>
    <scope>NUCLEOTIDE SEQUENCE [LARGE SCALE GENOMIC DNA]</scope>
    <source>
        <strain>KMS</strain>
    </source>
</reference>